<reference key="1">
    <citation type="journal article" date="1997" name="Nature">
        <title>The nucleotide sequence of Saccharomyces cerevisiae chromosome XIV and its evolutionary implications.</title>
        <authorList>
            <person name="Philippsen P."/>
            <person name="Kleine K."/>
            <person name="Poehlmann R."/>
            <person name="Duesterhoeft A."/>
            <person name="Hamberg K."/>
            <person name="Hegemann J.H."/>
            <person name="Obermaier B."/>
            <person name="Urrestarazu L.A."/>
            <person name="Aert R."/>
            <person name="Albermann K."/>
            <person name="Altmann R."/>
            <person name="Andre B."/>
            <person name="Baladron V."/>
            <person name="Ballesta J.P.G."/>
            <person name="Becam A.-M."/>
            <person name="Beinhauer J.D."/>
            <person name="Boskovic J."/>
            <person name="Buitrago M.J."/>
            <person name="Bussereau F."/>
            <person name="Coster F."/>
            <person name="Crouzet M."/>
            <person name="D'Angelo M."/>
            <person name="Dal Pero F."/>
            <person name="De Antoni A."/>
            <person name="del Rey F."/>
            <person name="Doignon F."/>
            <person name="Domdey H."/>
            <person name="Dubois E."/>
            <person name="Fiedler T.A."/>
            <person name="Fleig U."/>
            <person name="Floeth M."/>
            <person name="Fritz C."/>
            <person name="Gaillardin C."/>
            <person name="Garcia-Cantalejo J.M."/>
            <person name="Glansdorff N."/>
            <person name="Goffeau A."/>
            <person name="Gueldener U."/>
            <person name="Herbert C.J."/>
            <person name="Heumann K."/>
            <person name="Heuss-Neitzel D."/>
            <person name="Hilbert H."/>
            <person name="Hinni K."/>
            <person name="Iraqui Houssaini I."/>
            <person name="Jacquet M."/>
            <person name="Jimenez A."/>
            <person name="Jonniaux J.-L."/>
            <person name="Karpfinger-Hartl L."/>
            <person name="Lanfranchi G."/>
            <person name="Lepingle A."/>
            <person name="Levesque H."/>
            <person name="Lyck R."/>
            <person name="Maftahi M."/>
            <person name="Mallet L."/>
            <person name="Maurer C.T.C."/>
            <person name="Messenguy F."/>
            <person name="Mewes H.-W."/>
            <person name="Moestl D."/>
            <person name="Nasr F."/>
            <person name="Nicaud J.-M."/>
            <person name="Niedenthal R.K."/>
            <person name="Pandolfo D."/>
            <person name="Pierard A."/>
            <person name="Piravandi E."/>
            <person name="Planta R.J."/>
            <person name="Pohl T.M."/>
            <person name="Purnelle B."/>
            <person name="Rebischung C."/>
            <person name="Remacha M.A."/>
            <person name="Revuelta J.L."/>
            <person name="Rinke M."/>
            <person name="Saiz J.E."/>
            <person name="Sartorello F."/>
            <person name="Scherens B."/>
            <person name="Sen-Gupta M."/>
            <person name="Soler-Mira A."/>
            <person name="Urbanus J.H.M."/>
            <person name="Valle G."/>
            <person name="Van Dyck L."/>
            <person name="Verhasselt P."/>
            <person name="Vierendeels F."/>
            <person name="Vissers S."/>
            <person name="Voet M."/>
            <person name="Volckaert G."/>
            <person name="Wach A."/>
            <person name="Wambutt R."/>
            <person name="Wedler H."/>
            <person name="Zollner A."/>
            <person name="Hani J."/>
        </authorList>
    </citation>
    <scope>NUCLEOTIDE SEQUENCE [LARGE SCALE GENOMIC DNA]</scope>
    <source>
        <strain>ATCC 204508 / S288c</strain>
    </source>
</reference>
<reference key="2">
    <citation type="journal article" date="2014" name="G3 (Bethesda)">
        <title>The reference genome sequence of Saccharomyces cerevisiae: Then and now.</title>
        <authorList>
            <person name="Engel S.R."/>
            <person name="Dietrich F.S."/>
            <person name="Fisk D.G."/>
            <person name="Binkley G."/>
            <person name="Balakrishnan R."/>
            <person name="Costanzo M.C."/>
            <person name="Dwight S.S."/>
            <person name="Hitz B.C."/>
            <person name="Karra K."/>
            <person name="Nash R.S."/>
            <person name="Weng S."/>
            <person name="Wong E.D."/>
            <person name="Lloyd P."/>
            <person name="Skrzypek M.S."/>
            <person name="Miyasato S.R."/>
            <person name="Simison M."/>
            <person name="Cherry J.M."/>
        </authorList>
    </citation>
    <scope>GENOME REANNOTATION</scope>
    <source>
        <strain>ATCC 204508 / S288c</strain>
    </source>
</reference>
<reference key="3">
    <citation type="journal article" date="2003" name="Nature">
        <title>Global analysis of protein localization in budding yeast.</title>
        <authorList>
            <person name="Huh W.-K."/>
            <person name="Falvo J.V."/>
            <person name="Gerke L.C."/>
            <person name="Carroll A.S."/>
            <person name="Howson R.W."/>
            <person name="Weissman J.S."/>
            <person name="O'Shea E.K."/>
        </authorList>
    </citation>
    <scope>SUBCELLULAR LOCATION [LARGE SCALE ANALYSIS]</scope>
</reference>
<reference key="4">
    <citation type="journal article" date="2003" name="Nature">
        <title>Global analysis of protein expression in yeast.</title>
        <authorList>
            <person name="Ghaemmaghami S."/>
            <person name="Huh W.-K."/>
            <person name="Bower K."/>
            <person name="Howson R.W."/>
            <person name="Belle A."/>
            <person name="Dephoure N."/>
            <person name="O'Shea E.K."/>
            <person name="Weissman J.S."/>
        </authorList>
    </citation>
    <scope>LEVEL OF PROTEIN EXPRESSION [LARGE SCALE ANALYSIS]</scope>
</reference>
<reference key="5">
    <citation type="journal article" date="2005" name="Mol. Cell. Biol.">
        <title>Trm11p and Trm112p are both required for the formation of 2-methylguanosine at position 10 in yeast tRNA.</title>
        <authorList>
            <person name="Purushothaman S.K."/>
            <person name="Bujnicki J.M."/>
            <person name="Grosjean H."/>
            <person name="Lapeyre B."/>
        </authorList>
    </citation>
    <scope>FUNCTION</scope>
    <scope>INTERACTION WITH TRM9; TRM11; LYS9 AND MTQ2</scope>
</reference>
<reference key="6">
    <citation type="journal article" date="2012" name="Mol. Biol. Cell">
        <title>The methyltransferase adaptor protein Trm112 is involved in biogenesis of both ribosomal subunits.</title>
        <authorList>
            <person name="Sardana R."/>
            <person name="Johnson A.W."/>
        </authorList>
    </citation>
    <scope>FUNCTION</scope>
    <scope>INTERACTION WITH BUD23; NOP2 AND RCM1</scope>
</reference>
<reference key="7">
    <citation type="journal article" date="2012" name="Mol. Cell. Biol.">
        <title>Trm112 is required for Bud23-mediated methylation of the 18S rRNA at position G1575.</title>
        <authorList>
            <person name="Figaro S."/>
            <person name="Wacheul L."/>
            <person name="Schillewaert S."/>
            <person name="Graille M."/>
            <person name="Huvelle E."/>
            <person name="Mongeard R."/>
            <person name="Zorbas C."/>
            <person name="Lafontaine D.L."/>
            <person name="Heurgue-Hamard V."/>
        </authorList>
    </citation>
    <scope>FUNCTION</scope>
    <scope>INTERACTION WITH BUD23</scope>
</reference>
<reference key="8">
    <citation type="journal article" date="2006" name="J. Biol. Chem.">
        <title>The zinc finger protein Ynr046w is plurifunctional and a component of the eRF1 methyltransferase in yeast.</title>
        <authorList>
            <person name="Heurgue-Hamard V."/>
            <person name="Graille M."/>
            <person name="Scrima N."/>
            <person name="Ulryck N."/>
            <person name="Champ S."/>
            <person name="van Tilbeurgh H."/>
            <person name="Buckingham R.H."/>
        </authorList>
    </citation>
    <scope>X-RAY CRYSTALLOGRAPHY (1.7 ANGSTROMS)</scope>
    <scope>FUNCTION</scope>
    <scope>INTERACTION WITH MTQ2</scope>
</reference>
<dbReference type="EMBL" id="Z71661">
    <property type="protein sequence ID" value="CAA96327.1"/>
    <property type="molecule type" value="Genomic_DNA"/>
</dbReference>
<dbReference type="EMBL" id="BK006947">
    <property type="protein sequence ID" value="DAA10587.1"/>
    <property type="molecule type" value="Genomic_DNA"/>
</dbReference>
<dbReference type="PIR" id="S63377">
    <property type="entry name" value="S63377"/>
</dbReference>
<dbReference type="RefSeq" id="NP_014444.1">
    <property type="nucleotide sequence ID" value="NM_001183223.1"/>
</dbReference>
<dbReference type="PDB" id="2J6A">
    <property type="method" value="X-ray"/>
    <property type="resolution" value="1.70 A"/>
    <property type="chains" value="A=1-135"/>
</dbReference>
<dbReference type="PDB" id="4QTT">
    <property type="method" value="X-ray"/>
    <property type="resolution" value="2.00 A"/>
    <property type="chains" value="A/C=1-135"/>
</dbReference>
<dbReference type="PDB" id="4QTU">
    <property type="method" value="X-ray"/>
    <property type="resolution" value="2.12 A"/>
    <property type="chains" value="A/C=1-135"/>
</dbReference>
<dbReference type="PDBsum" id="2J6A"/>
<dbReference type="PDBsum" id="4QTT"/>
<dbReference type="PDBsum" id="4QTU"/>
<dbReference type="SMR" id="P53738"/>
<dbReference type="BioGRID" id="35871">
    <property type="interactions" value="88"/>
</dbReference>
<dbReference type="ComplexPortal" id="CPX-1047">
    <property type="entry name" value="BUD23-TRM112 methyltransferase complex"/>
</dbReference>
<dbReference type="ComplexPortal" id="CPX-1052">
    <property type="entry name" value="TRM9-TRM112 methyltransferase complex"/>
</dbReference>
<dbReference type="ComplexPortal" id="CPX-418">
    <property type="entry name" value="MTQ2-TRM112 eRF1 methyltransferase complex"/>
</dbReference>
<dbReference type="ComplexPortal" id="CPX-778">
    <property type="entry name" value="TRM11-TRM112 tRNA (m2G10) methyltransferase complex"/>
</dbReference>
<dbReference type="DIP" id="DIP-2052N"/>
<dbReference type="FunCoup" id="P53738">
    <property type="interactions" value="1006"/>
</dbReference>
<dbReference type="IntAct" id="P53738">
    <property type="interactions" value="13"/>
</dbReference>
<dbReference type="MINT" id="P53738"/>
<dbReference type="STRING" id="4932.YNR046W"/>
<dbReference type="iPTMnet" id="P53738"/>
<dbReference type="PaxDb" id="4932-YNR046W"/>
<dbReference type="PeptideAtlas" id="P53738"/>
<dbReference type="EnsemblFungi" id="YNR046W_mRNA">
    <property type="protein sequence ID" value="YNR046W"/>
    <property type="gene ID" value="YNR046W"/>
</dbReference>
<dbReference type="GeneID" id="855782"/>
<dbReference type="KEGG" id="sce:YNR046W"/>
<dbReference type="AGR" id="SGD:S000005329"/>
<dbReference type="SGD" id="S000005329">
    <property type="gene designation" value="TRM112"/>
</dbReference>
<dbReference type="VEuPathDB" id="FungiDB:YNR046W"/>
<dbReference type="eggNOG" id="KOG1088">
    <property type="taxonomic scope" value="Eukaryota"/>
</dbReference>
<dbReference type="GeneTree" id="ENSGT00940000164608"/>
<dbReference type="HOGENOM" id="CLU_086140_0_0_1"/>
<dbReference type="InParanoid" id="P53738"/>
<dbReference type="OMA" id="NMLTSKC"/>
<dbReference type="OrthoDB" id="2187549at2759"/>
<dbReference type="BioCyc" id="MetaCyc:G3O-33353-MONOMER"/>
<dbReference type="BioCyc" id="YEAST:G3O-33353-MONOMER"/>
<dbReference type="Reactome" id="R-SCE-156581">
    <property type="pathway name" value="Methylation"/>
</dbReference>
<dbReference type="Reactome" id="R-SCE-72764">
    <property type="pathway name" value="Eukaryotic Translation Termination"/>
</dbReference>
<dbReference type="BioGRID-ORCS" id="855782">
    <property type="hits" value="9 hits in 10 CRISPR screens"/>
</dbReference>
<dbReference type="EvolutionaryTrace" id="P53738"/>
<dbReference type="PRO" id="PR:P53738"/>
<dbReference type="Proteomes" id="UP000002311">
    <property type="component" value="Chromosome XIV"/>
</dbReference>
<dbReference type="RNAct" id="P53738">
    <property type="molecule type" value="protein"/>
</dbReference>
<dbReference type="GO" id="GO:0005737">
    <property type="term" value="C:cytoplasm"/>
    <property type="evidence" value="ECO:0007005"/>
    <property type="project" value="SGD"/>
</dbReference>
<dbReference type="GO" id="GO:0005829">
    <property type="term" value="C:cytosol"/>
    <property type="evidence" value="ECO:0000304"/>
    <property type="project" value="Reactome"/>
</dbReference>
<dbReference type="GO" id="GO:0035657">
    <property type="term" value="C:eRF1 methyltransferase complex"/>
    <property type="evidence" value="ECO:0000353"/>
    <property type="project" value="ComplexPortal"/>
</dbReference>
<dbReference type="GO" id="GO:0005730">
    <property type="term" value="C:nucleolus"/>
    <property type="evidence" value="ECO:0007005"/>
    <property type="project" value="SGD"/>
</dbReference>
<dbReference type="GO" id="GO:0005634">
    <property type="term" value="C:nucleus"/>
    <property type="evidence" value="ECO:0007005"/>
    <property type="project" value="SGD"/>
</dbReference>
<dbReference type="GO" id="GO:0005840">
    <property type="term" value="C:ribosome"/>
    <property type="evidence" value="ECO:0000303"/>
    <property type="project" value="ComplexPortal"/>
</dbReference>
<dbReference type="GO" id="GO:0043528">
    <property type="term" value="C:tRNA (m2G10) methyltransferase complex"/>
    <property type="evidence" value="ECO:0000353"/>
    <property type="project" value="ComplexPortal"/>
</dbReference>
<dbReference type="GO" id="GO:0043527">
    <property type="term" value="C:tRNA methyltransferase complex"/>
    <property type="evidence" value="ECO:0000353"/>
    <property type="project" value="ComplexPortal"/>
</dbReference>
<dbReference type="GO" id="GO:0046982">
    <property type="term" value="F:protein heterodimerization activity"/>
    <property type="evidence" value="ECO:0007669"/>
    <property type="project" value="InterPro"/>
</dbReference>
<dbReference type="GO" id="GO:0141106">
    <property type="term" value="F:tRNA methyltransferase activator activity"/>
    <property type="evidence" value="ECO:0000318"/>
    <property type="project" value="GO_Central"/>
</dbReference>
<dbReference type="GO" id="GO:0000470">
    <property type="term" value="P:maturation of LSU-rRNA"/>
    <property type="evidence" value="ECO:0000315"/>
    <property type="project" value="SGD"/>
</dbReference>
<dbReference type="GO" id="GO:0030490">
    <property type="term" value="P:maturation of SSU-rRNA"/>
    <property type="evidence" value="ECO:0000315"/>
    <property type="project" value="SGD"/>
</dbReference>
<dbReference type="GO" id="GO:2000234">
    <property type="term" value="P:positive regulation of rRNA processing"/>
    <property type="evidence" value="ECO:0000318"/>
    <property type="project" value="GO_Central"/>
</dbReference>
<dbReference type="GO" id="GO:0060566">
    <property type="term" value="P:positive regulation of termination of DNA-templated transcription"/>
    <property type="evidence" value="ECO:0000303"/>
    <property type="project" value="ComplexPortal"/>
</dbReference>
<dbReference type="GO" id="GO:0042273">
    <property type="term" value="P:ribosomal large subunit biogenesis"/>
    <property type="evidence" value="ECO:0000315"/>
    <property type="project" value="SGD"/>
</dbReference>
<dbReference type="GO" id="GO:0042274">
    <property type="term" value="P:ribosomal small subunit biogenesis"/>
    <property type="evidence" value="ECO:0000315"/>
    <property type="project" value="SGD"/>
</dbReference>
<dbReference type="GO" id="GO:0070476">
    <property type="term" value="P:rRNA (guanine-N7)-methylation"/>
    <property type="evidence" value="ECO:0000315"/>
    <property type="project" value="SGD"/>
</dbReference>
<dbReference type="GO" id="GO:0030488">
    <property type="term" value="P:tRNA methylation"/>
    <property type="evidence" value="ECO:0000314"/>
    <property type="project" value="ComplexPortal"/>
</dbReference>
<dbReference type="GO" id="GO:0002098">
    <property type="term" value="P:tRNA wobble uridine modification"/>
    <property type="evidence" value="ECO:0000314"/>
    <property type="project" value="ComplexPortal"/>
</dbReference>
<dbReference type="CDD" id="cd21089">
    <property type="entry name" value="Trm112-like"/>
    <property type="match status" value="1"/>
</dbReference>
<dbReference type="FunFam" id="2.20.25.10:FF:000021">
    <property type="entry name" value="Multifunctional methyltransferase subunit trm112"/>
    <property type="match status" value="1"/>
</dbReference>
<dbReference type="Gene3D" id="2.20.25.10">
    <property type="match status" value="1"/>
</dbReference>
<dbReference type="InterPro" id="IPR039127">
    <property type="entry name" value="Trm112"/>
</dbReference>
<dbReference type="InterPro" id="IPR005651">
    <property type="entry name" value="Trm112-like"/>
</dbReference>
<dbReference type="PANTHER" id="PTHR12773:SF0">
    <property type="entry name" value="MULTIFUNCTIONAL METHYLTRANSFERASE SUBUNIT TRM112-LIKE PROTEIN"/>
    <property type="match status" value="1"/>
</dbReference>
<dbReference type="PANTHER" id="PTHR12773">
    <property type="entry name" value="UPF0315 PROTEIN-RELATED"/>
    <property type="match status" value="1"/>
</dbReference>
<dbReference type="Pfam" id="PF03966">
    <property type="entry name" value="Trm112p"/>
    <property type="match status" value="1"/>
</dbReference>
<dbReference type="SUPFAM" id="SSF158997">
    <property type="entry name" value="Trm112p-like"/>
    <property type="match status" value="1"/>
</dbReference>
<evidence type="ECO:0000269" key="1">
    <source>
    </source>
</evidence>
<evidence type="ECO:0000269" key="2">
    <source>
    </source>
</evidence>
<evidence type="ECO:0000269" key="3">
    <source>
    </source>
</evidence>
<evidence type="ECO:0000269" key="4">
    <source>
    </source>
</evidence>
<evidence type="ECO:0000269" key="5">
    <source>
    </source>
</evidence>
<evidence type="ECO:0000269" key="6">
    <source>
    </source>
</evidence>
<evidence type="ECO:0000305" key="7"/>
<evidence type="ECO:0007829" key="8">
    <source>
        <dbReference type="PDB" id="2J6A"/>
    </source>
</evidence>
<accession>P53738</accession>
<accession>D6W1M1</accession>
<proteinExistence type="evidence at protein level"/>
<comment type="function">
    <text evidence="3 4 5 6">Acts as an activator of both rRNA/tRNA and protein methyltransferases. Together with methyltransferase MTQ2, required for the methylation of eRF1 on 'Gln-182'. Together with methyltransferase TRM11, required for the formation of 2-methylguanosine at position 10 (m2G10) in tRNA. Together with methyltransferase BUD23, required for the formation of 7-methylguanine at position 1575 (m7G1575) in 18S rRNA. Involved in biogenesis of both 40S and 60S ribosomal subunits.</text>
</comment>
<comment type="subunit">
    <text evidence="3 4 5 6">Heterodimer of MTQ2-TRM112, forming the eRF1 methyltransferase. TRM112 is necessary for the solubility and activity of the catalytic subunit MTQ2. Interacts with TRM11; required for full tRNA methyltransferase activity. Interacts with BUD23; required for full rRNA methyltransferase activity. Interacts with RCM1, NOP2, TRM9 and LYS9.</text>
</comment>
<comment type="interaction">
    <interactant intactId="EBI-28520">
        <id>P53738</id>
    </interactant>
    <interactant intactId="EBI-21924">
        <id>P25627</id>
        <label>BUD23</label>
    </interactant>
    <organismsDiffer>false</organismsDiffer>
    <experiments>6</experiments>
</comment>
<comment type="interaction">
    <interactant intactId="EBI-28520">
        <id>P53738</id>
    </interactant>
    <interactant intactId="EBI-31378">
        <id>Q03920</id>
        <label>MTQ2</label>
    </interactant>
    <organismsDiffer>false</organismsDiffer>
    <experiments>4</experiments>
</comment>
<comment type="interaction">
    <interactant intactId="EBI-28520">
        <id>P53738</id>
    </interactant>
    <interactant intactId="EBI-30471">
        <id>Q12463</id>
        <label>TRM11</label>
    </interactant>
    <organismsDiffer>false</organismsDiffer>
    <experiments>5</experiments>
</comment>
<comment type="interaction">
    <interactant intactId="EBI-28520">
        <id>P53738</id>
    </interactant>
    <interactant intactId="EBI-27735">
        <id>P49957</id>
        <label>TRM9</label>
    </interactant>
    <organismsDiffer>false</organismsDiffer>
    <experiments>3</experiments>
</comment>
<comment type="subcellular location">
    <subcellularLocation>
        <location evidence="1">Cytoplasm</location>
    </subcellularLocation>
    <subcellularLocation>
        <location evidence="1">Nucleus</location>
    </subcellularLocation>
</comment>
<comment type="miscellaneous">
    <text evidence="2">Present with 4800 molecules/cell in log phase SD medium.</text>
</comment>
<comment type="similarity">
    <text evidence="7">Belongs to the TRM112 family.</text>
</comment>
<sequence>MKFLTTNFLKCSVKACDTSNDNFPLQYDGSKCQLVQDESIEFNPEFLLNIVDRVDWPAVLTVAAELGNNALPPTKPSFPSSIQELTDDDMAILNDLHTLLLQTSIAEGEMKCRNCGHIYYIKNGIPNLLLPPHLV</sequence>
<name>TR112_YEAST</name>
<protein>
    <recommendedName>
        <fullName>Multifunctional methyltransferase subunit TRM112</fullName>
    </recommendedName>
    <alternativeName>
        <fullName>eRF1 methyltransferase subunit TRM112</fullName>
        <shortName>eRF1 MTase subunit TRM112</shortName>
    </alternativeName>
    <alternativeName>
        <fullName>tRNA methyltransferase 112</fullName>
    </alternativeName>
</protein>
<gene>
    <name type="primary">TRM112</name>
    <name type="ordered locus">YNR046W</name>
    <name type="ORF">N3445</name>
</gene>
<organism>
    <name type="scientific">Saccharomyces cerevisiae (strain ATCC 204508 / S288c)</name>
    <name type="common">Baker's yeast</name>
    <dbReference type="NCBI Taxonomy" id="559292"/>
    <lineage>
        <taxon>Eukaryota</taxon>
        <taxon>Fungi</taxon>
        <taxon>Dikarya</taxon>
        <taxon>Ascomycota</taxon>
        <taxon>Saccharomycotina</taxon>
        <taxon>Saccharomycetes</taxon>
        <taxon>Saccharomycetales</taxon>
        <taxon>Saccharomycetaceae</taxon>
        <taxon>Saccharomyces</taxon>
    </lineage>
</organism>
<feature type="chain" id="PRO_0000215805" description="Multifunctional methyltransferase subunit TRM112">
    <location>
        <begin position="1"/>
        <end position="135"/>
    </location>
</feature>
<feature type="domain" description="TRM112">
    <location>
        <begin position="2"/>
        <end position="131"/>
    </location>
</feature>
<feature type="helix" evidence="8">
    <location>
        <begin position="3"/>
        <end position="7"/>
    </location>
</feature>
<feature type="helix" evidence="8">
    <location>
        <begin position="14"/>
        <end position="16"/>
    </location>
</feature>
<feature type="strand" evidence="8">
    <location>
        <begin position="22"/>
        <end position="24"/>
    </location>
</feature>
<feature type="turn" evidence="8">
    <location>
        <begin position="29"/>
        <end position="31"/>
    </location>
</feature>
<feature type="strand" evidence="8">
    <location>
        <begin position="33"/>
        <end position="36"/>
    </location>
</feature>
<feature type="helix" evidence="8">
    <location>
        <begin position="44"/>
        <end position="53"/>
    </location>
</feature>
<feature type="helix" evidence="8">
    <location>
        <begin position="56"/>
        <end position="65"/>
    </location>
</feature>
<feature type="helix" evidence="8">
    <location>
        <begin position="82"/>
        <end position="84"/>
    </location>
</feature>
<feature type="helix" evidence="8">
    <location>
        <begin position="87"/>
        <end position="100"/>
    </location>
</feature>
<feature type="strand" evidence="8">
    <location>
        <begin position="103"/>
        <end position="111"/>
    </location>
</feature>
<feature type="turn" evidence="8">
    <location>
        <begin position="113"/>
        <end position="115"/>
    </location>
</feature>
<feature type="strand" evidence="8">
    <location>
        <begin position="118"/>
        <end position="122"/>
    </location>
</feature>
<feature type="strand" evidence="8">
    <location>
        <begin position="125"/>
        <end position="128"/>
    </location>
</feature>
<keyword id="KW-0002">3D-structure</keyword>
<keyword id="KW-0963">Cytoplasm</keyword>
<keyword id="KW-0539">Nucleus</keyword>
<keyword id="KW-1185">Reference proteome</keyword>